<feature type="chain" id="PRO_1000147038" description="Chaperonin GroEL">
    <location>
        <begin position="1"/>
        <end position="539"/>
    </location>
</feature>
<feature type="binding site" evidence="1">
    <location>
        <begin position="29"/>
        <end position="32"/>
    </location>
    <ligand>
        <name>ATP</name>
        <dbReference type="ChEBI" id="CHEBI:30616"/>
    </ligand>
</feature>
<feature type="binding site" evidence="1">
    <location>
        <begin position="86"/>
        <end position="90"/>
    </location>
    <ligand>
        <name>ATP</name>
        <dbReference type="ChEBI" id="CHEBI:30616"/>
    </ligand>
</feature>
<feature type="binding site" evidence="1">
    <location>
        <position position="413"/>
    </location>
    <ligand>
        <name>ATP</name>
        <dbReference type="ChEBI" id="CHEBI:30616"/>
    </ligand>
</feature>
<feature type="binding site" evidence="1">
    <location>
        <begin position="476"/>
        <end position="478"/>
    </location>
    <ligand>
        <name>ATP</name>
        <dbReference type="ChEBI" id="CHEBI:30616"/>
    </ligand>
</feature>
<feature type="binding site" evidence="1">
    <location>
        <position position="492"/>
    </location>
    <ligand>
        <name>ATP</name>
        <dbReference type="ChEBI" id="CHEBI:30616"/>
    </ligand>
</feature>
<comment type="function">
    <text evidence="1">Together with its co-chaperonin GroES, plays an essential role in assisting protein folding. The GroEL-GroES system forms a nano-cage that allows encapsulation of the non-native substrate proteins and provides a physical environment optimized to promote and accelerate protein folding.</text>
</comment>
<comment type="catalytic activity">
    <reaction evidence="1">
        <text>ATP + H2O + a folded polypeptide = ADP + phosphate + an unfolded polypeptide.</text>
        <dbReference type="EC" id="5.6.1.7"/>
    </reaction>
</comment>
<comment type="subunit">
    <text evidence="1">Forms a cylinder of 14 subunits composed of two heptameric rings stacked back-to-back. Interacts with the co-chaperonin GroES.</text>
</comment>
<comment type="subcellular location">
    <subcellularLocation>
        <location evidence="1">Cytoplasm</location>
    </subcellularLocation>
</comment>
<comment type="similarity">
    <text evidence="1">Belongs to the chaperonin (HSP60) family.</text>
</comment>
<sequence length="539" mass="57053">MVKEIKFSEDARRAMLAGVDKLADAVKVTLGPKGRNVVLDKKFVAPLITNDGVTIAKEIELEDPYENMGAKLVAEVANKTNEIAGDGTTTATVLAQAMIQEGLKNVTSGANPVGIRQGIDKAVAVALEELAAISKTVSSKEEIAQVGSISAADEEIGQFISEAMEKVGNDGVITIEESKGFKTELEVVEGMQFDRGYASPYMVTDSDKMIADLENPYILITDKKISSFQDILPILEQIVQTSRPILIVAEDVDGDALTNIVLNRLRGTFTAVAVKAPGFGDRRKAMLEDLAILTGGQVITDDLGLDLKDTTVEMLGNAGKVHVTKDNTTIVEGRGDASNIDARVGQLKAQIEETTSEFDKEKLQERLAKLAGGVAVIKVGAATETELKERKLRIEDALNSTRAAVEEGIVAGGGTALVSIYNKVAAVEATGDVATGVKIVLKALEAPIRQIAENAGLEGSVIVEKIKHAETGVGYNAATDEWVNMIDAGIVDPTKVTRSALQNAASVAAMFLTTEAVVAEMPEENPTPDMGMGGMPGMM</sequence>
<keyword id="KW-0067">ATP-binding</keyword>
<keyword id="KW-0143">Chaperone</keyword>
<keyword id="KW-0963">Cytoplasm</keyword>
<keyword id="KW-0413">Isomerase</keyword>
<keyword id="KW-0547">Nucleotide-binding</keyword>
<keyword id="KW-1185">Reference proteome</keyword>
<proteinExistence type="inferred from homology"/>
<accession>B9E899</accession>
<gene>
    <name evidence="1" type="primary">groEL</name>
    <name evidence="1" type="synonym">groL</name>
    <name type="ordered locus">MCCL_1710</name>
</gene>
<organism>
    <name type="scientific">Macrococcus caseolyticus (strain JCSC5402)</name>
    <name type="common">Macrococcoides caseolyticum</name>
    <dbReference type="NCBI Taxonomy" id="458233"/>
    <lineage>
        <taxon>Bacteria</taxon>
        <taxon>Bacillati</taxon>
        <taxon>Bacillota</taxon>
        <taxon>Bacilli</taxon>
        <taxon>Bacillales</taxon>
        <taxon>Staphylococcaceae</taxon>
        <taxon>Macrococcoides</taxon>
    </lineage>
</organism>
<dbReference type="EC" id="5.6.1.7" evidence="1"/>
<dbReference type="EMBL" id="AP009484">
    <property type="protein sequence ID" value="BAH18417.1"/>
    <property type="molecule type" value="Genomic_DNA"/>
</dbReference>
<dbReference type="RefSeq" id="WP_015912209.1">
    <property type="nucleotide sequence ID" value="NC_011999.1"/>
</dbReference>
<dbReference type="SMR" id="B9E899"/>
<dbReference type="STRING" id="458233.MCCL_1710"/>
<dbReference type="KEGG" id="mcl:MCCL_1710"/>
<dbReference type="eggNOG" id="COG0459">
    <property type="taxonomic scope" value="Bacteria"/>
</dbReference>
<dbReference type="HOGENOM" id="CLU_016503_3_0_9"/>
<dbReference type="OrthoDB" id="9766614at2"/>
<dbReference type="Proteomes" id="UP000001383">
    <property type="component" value="Chromosome"/>
</dbReference>
<dbReference type="GO" id="GO:0005737">
    <property type="term" value="C:cytoplasm"/>
    <property type="evidence" value="ECO:0007669"/>
    <property type="project" value="UniProtKB-SubCell"/>
</dbReference>
<dbReference type="GO" id="GO:0005524">
    <property type="term" value="F:ATP binding"/>
    <property type="evidence" value="ECO:0007669"/>
    <property type="project" value="UniProtKB-UniRule"/>
</dbReference>
<dbReference type="GO" id="GO:0140662">
    <property type="term" value="F:ATP-dependent protein folding chaperone"/>
    <property type="evidence" value="ECO:0007669"/>
    <property type="project" value="InterPro"/>
</dbReference>
<dbReference type="GO" id="GO:0016853">
    <property type="term" value="F:isomerase activity"/>
    <property type="evidence" value="ECO:0007669"/>
    <property type="project" value="UniProtKB-KW"/>
</dbReference>
<dbReference type="GO" id="GO:0051082">
    <property type="term" value="F:unfolded protein binding"/>
    <property type="evidence" value="ECO:0007669"/>
    <property type="project" value="UniProtKB-UniRule"/>
</dbReference>
<dbReference type="GO" id="GO:0042026">
    <property type="term" value="P:protein refolding"/>
    <property type="evidence" value="ECO:0007669"/>
    <property type="project" value="UniProtKB-UniRule"/>
</dbReference>
<dbReference type="CDD" id="cd03344">
    <property type="entry name" value="GroEL"/>
    <property type="match status" value="1"/>
</dbReference>
<dbReference type="FunFam" id="3.50.7.10:FF:000001">
    <property type="entry name" value="60 kDa chaperonin"/>
    <property type="match status" value="1"/>
</dbReference>
<dbReference type="Gene3D" id="3.50.7.10">
    <property type="entry name" value="GroEL"/>
    <property type="match status" value="1"/>
</dbReference>
<dbReference type="Gene3D" id="1.10.560.10">
    <property type="entry name" value="GroEL-like equatorial domain"/>
    <property type="match status" value="1"/>
</dbReference>
<dbReference type="Gene3D" id="3.30.260.10">
    <property type="entry name" value="TCP-1-like chaperonin intermediate domain"/>
    <property type="match status" value="1"/>
</dbReference>
<dbReference type="HAMAP" id="MF_00600">
    <property type="entry name" value="CH60"/>
    <property type="match status" value="1"/>
</dbReference>
<dbReference type="InterPro" id="IPR018370">
    <property type="entry name" value="Chaperonin_Cpn60_CS"/>
</dbReference>
<dbReference type="InterPro" id="IPR001844">
    <property type="entry name" value="Cpn60/GroEL"/>
</dbReference>
<dbReference type="InterPro" id="IPR002423">
    <property type="entry name" value="Cpn60/GroEL/TCP-1"/>
</dbReference>
<dbReference type="InterPro" id="IPR027409">
    <property type="entry name" value="GroEL-like_apical_dom_sf"/>
</dbReference>
<dbReference type="InterPro" id="IPR027413">
    <property type="entry name" value="GROEL-like_equatorial_sf"/>
</dbReference>
<dbReference type="InterPro" id="IPR027410">
    <property type="entry name" value="TCP-1-like_intermed_sf"/>
</dbReference>
<dbReference type="NCBIfam" id="TIGR02348">
    <property type="entry name" value="GroEL"/>
    <property type="match status" value="1"/>
</dbReference>
<dbReference type="NCBIfam" id="NF000592">
    <property type="entry name" value="PRK00013.1"/>
    <property type="match status" value="1"/>
</dbReference>
<dbReference type="NCBIfam" id="NF009487">
    <property type="entry name" value="PRK12849.1"/>
    <property type="match status" value="1"/>
</dbReference>
<dbReference type="NCBIfam" id="NF009488">
    <property type="entry name" value="PRK12850.1"/>
    <property type="match status" value="1"/>
</dbReference>
<dbReference type="NCBIfam" id="NF009489">
    <property type="entry name" value="PRK12851.1"/>
    <property type="match status" value="1"/>
</dbReference>
<dbReference type="PANTHER" id="PTHR45633">
    <property type="entry name" value="60 KDA HEAT SHOCK PROTEIN, MITOCHONDRIAL"/>
    <property type="match status" value="1"/>
</dbReference>
<dbReference type="Pfam" id="PF00118">
    <property type="entry name" value="Cpn60_TCP1"/>
    <property type="match status" value="1"/>
</dbReference>
<dbReference type="PRINTS" id="PR00298">
    <property type="entry name" value="CHAPERONIN60"/>
</dbReference>
<dbReference type="SUPFAM" id="SSF52029">
    <property type="entry name" value="GroEL apical domain-like"/>
    <property type="match status" value="1"/>
</dbReference>
<dbReference type="SUPFAM" id="SSF48592">
    <property type="entry name" value="GroEL equatorial domain-like"/>
    <property type="match status" value="1"/>
</dbReference>
<dbReference type="SUPFAM" id="SSF54849">
    <property type="entry name" value="GroEL-intermediate domain like"/>
    <property type="match status" value="1"/>
</dbReference>
<dbReference type="PROSITE" id="PS00296">
    <property type="entry name" value="CHAPERONINS_CPN60"/>
    <property type="match status" value="1"/>
</dbReference>
<protein>
    <recommendedName>
        <fullName evidence="1">Chaperonin GroEL</fullName>
        <ecNumber evidence="1">5.6.1.7</ecNumber>
    </recommendedName>
    <alternativeName>
        <fullName evidence="1">60 kDa chaperonin</fullName>
    </alternativeName>
    <alternativeName>
        <fullName evidence="1">Chaperonin-60</fullName>
        <shortName evidence="1">Cpn60</shortName>
    </alternativeName>
</protein>
<name>CH60_MACCJ</name>
<evidence type="ECO:0000255" key="1">
    <source>
        <dbReference type="HAMAP-Rule" id="MF_00600"/>
    </source>
</evidence>
<reference key="1">
    <citation type="journal article" date="2009" name="J. Bacteriol.">
        <title>Complete genome sequence of Macrococcus caseolyticus strain JCSCS5402, reflecting the ancestral genome of the human-pathogenic staphylococci.</title>
        <authorList>
            <person name="Baba T."/>
            <person name="Kuwahara-Arai K."/>
            <person name="Uchiyama I."/>
            <person name="Takeuchi F."/>
            <person name="Ito T."/>
            <person name="Hiramatsu K."/>
        </authorList>
    </citation>
    <scope>NUCLEOTIDE SEQUENCE [LARGE SCALE GENOMIC DNA]</scope>
    <source>
        <strain>JCSC5402</strain>
    </source>
</reference>